<evidence type="ECO:0000250" key="1">
    <source>
        <dbReference type="UniProtKB" id="O43504"/>
    </source>
</evidence>
<evidence type="ECO:0000305" key="2"/>
<name>LTOR5_BOVIN</name>
<proteinExistence type="inferred from homology"/>
<keyword id="KW-0007">Acetylation</keyword>
<keyword id="KW-0963">Cytoplasm</keyword>
<keyword id="KW-0458">Lysosome</keyword>
<keyword id="KW-1185">Reference proteome</keyword>
<organism>
    <name type="scientific">Bos taurus</name>
    <name type="common">Bovine</name>
    <dbReference type="NCBI Taxonomy" id="9913"/>
    <lineage>
        <taxon>Eukaryota</taxon>
        <taxon>Metazoa</taxon>
        <taxon>Chordata</taxon>
        <taxon>Craniata</taxon>
        <taxon>Vertebrata</taxon>
        <taxon>Euteleostomi</taxon>
        <taxon>Mammalia</taxon>
        <taxon>Eutheria</taxon>
        <taxon>Laurasiatheria</taxon>
        <taxon>Artiodactyla</taxon>
        <taxon>Ruminantia</taxon>
        <taxon>Pecora</taxon>
        <taxon>Bovidae</taxon>
        <taxon>Bovinae</taxon>
        <taxon>Bos</taxon>
    </lineage>
</organism>
<sequence length="91" mass="9614">MEATLEQHLEDTMKNPSIVGVLCTDSQGLNLGCRGTLSDEHAGVISVLAQQAAKLTSDPTDIPVVCLESDNGNIMIQKHDGITVAVHKMAS</sequence>
<dbReference type="EMBL" id="BC103091">
    <property type="protein sequence ID" value="AAI03092.1"/>
    <property type="molecule type" value="mRNA"/>
</dbReference>
<dbReference type="RefSeq" id="NP_001029689.1">
    <property type="nucleotide sequence ID" value="NM_001034517.2"/>
</dbReference>
<dbReference type="SMR" id="Q3SZ68"/>
<dbReference type="FunCoup" id="Q3SZ68">
    <property type="interactions" value="1527"/>
</dbReference>
<dbReference type="STRING" id="9913.ENSBTAP00000019928"/>
<dbReference type="PaxDb" id="9913-ENSBTAP00000019928"/>
<dbReference type="PeptideAtlas" id="Q3SZ68"/>
<dbReference type="Ensembl" id="ENSBTAT00000019928.4">
    <property type="protein sequence ID" value="ENSBTAP00000019928.3"/>
    <property type="gene ID" value="ENSBTAG00000014970.5"/>
</dbReference>
<dbReference type="GeneID" id="516090"/>
<dbReference type="KEGG" id="bta:516090"/>
<dbReference type="CTD" id="10542"/>
<dbReference type="VEuPathDB" id="HostDB:ENSBTAG00000014970"/>
<dbReference type="VGNC" id="VGNC:55244">
    <property type="gene designation" value="LAMTOR5"/>
</dbReference>
<dbReference type="eggNOG" id="ENOG502S5TK">
    <property type="taxonomic scope" value="Eukaryota"/>
</dbReference>
<dbReference type="GeneTree" id="ENSGT00390000006247"/>
<dbReference type="HOGENOM" id="CLU_164970_0_0_1"/>
<dbReference type="InParanoid" id="Q3SZ68"/>
<dbReference type="OMA" id="GIIYKQT"/>
<dbReference type="OrthoDB" id="76862at2759"/>
<dbReference type="TreeFam" id="TF324433"/>
<dbReference type="Reactome" id="R-BTA-1632852">
    <property type="pathway name" value="Macroautophagy"/>
</dbReference>
<dbReference type="Reactome" id="R-BTA-165159">
    <property type="pathway name" value="MTOR signalling"/>
</dbReference>
<dbReference type="Reactome" id="R-BTA-166208">
    <property type="pathway name" value="mTORC1-mediated signalling"/>
</dbReference>
<dbReference type="Reactome" id="R-BTA-380972">
    <property type="pathway name" value="Energy dependent regulation of mTOR by LKB1-AMPK"/>
</dbReference>
<dbReference type="Reactome" id="R-BTA-5628897">
    <property type="pathway name" value="TP53 Regulates Metabolic Genes"/>
</dbReference>
<dbReference type="Reactome" id="R-BTA-8943724">
    <property type="pathway name" value="Regulation of PTEN gene transcription"/>
</dbReference>
<dbReference type="Reactome" id="R-BTA-9639288">
    <property type="pathway name" value="Amino acids regulate mTORC1"/>
</dbReference>
<dbReference type="Proteomes" id="UP000009136">
    <property type="component" value="Chromosome 3"/>
</dbReference>
<dbReference type="Bgee" id="ENSBTAG00000014970">
    <property type="expression patterns" value="Expressed in pons and 104 other cell types or tissues"/>
</dbReference>
<dbReference type="GO" id="GO:0005829">
    <property type="term" value="C:cytosol"/>
    <property type="evidence" value="ECO:0007669"/>
    <property type="project" value="UniProtKB-SubCell"/>
</dbReference>
<dbReference type="GO" id="GO:0005765">
    <property type="term" value="C:lysosomal membrane"/>
    <property type="evidence" value="ECO:0000250"/>
    <property type="project" value="UniProtKB"/>
</dbReference>
<dbReference type="GO" id="GO:0005764">
    <property type="term" value="C:lysosome"/>
    <property type="evidence" value="ECO:0000250"/>
    <property type="project" value="UniProtKB"/>
</dbReference>
<dbReference type="GO" id="GO:0071986">
    <property type="term" value="C:Ragulator complex"/>
    <property type="evidence" value="ECO:0000250"/>
    <property type="project" value="UniProtKB"/>
</dbReference>
<dbReference type="GO" id="GO:0071230">
    <property type="term" value="P:cellular response to amino acid stimulus"/>
    <property type="evidence" value="ECO:0000250"/>
    <property type="project" value="UniProtKB"/>
</dbReference>
<dbReference type="GO" id="GO:0043066">
    <property type="term" value="P:negative regulation of apoptotic process"/>
    <property type="evidence" value="ECO:0007669"/>
    <property type="project" value="InterPro"/>
</dbReference>
<dbReference type="GO" id="GO:0032008">
    <property type="term" value="P:positive regulation of TOR signaling"/>
    <property type="evidence" value="ECO:0000250"/>
    <property type="project" value="UniProtKB"/>
</dbReference>
<dbReference type="GO" id="GO:1904263">
    <property type="term" value="P:positive regulation of TORC1 signaling"/>
    <property type="evidence" value="ECO:0000250"/>
    <property type="project" value="UniProtKB"/>
</dbReference>
<dbReference type="GO" id="GO:0061462">
    <property type="term" value="P:protein localization to lysosome"/>
    <property type="evidence" value="ECO:0000250"/>
    <property type="project" value="UniProtKB"/>
</dbReference>
<dbReference type="GO" id="GO:0008361">
    <property type="term" value="P:regulation of cell size"/>
    <property type="evidence" value="ECO:0000250"/>
    <property type="project" value="UniProtKB"/>
</dbReference>
<dbReference type="FunFam" id="3.30.450.30:FF:000005">
    <property type="entry name" value="Ragulator complex protein LAMTOR5 homolog"/>
    <property type="match status" value="1"/>
</dbReference>
<dbReference type="Gene3D" id="3.30.450.30">
    <property type="entry name" value="Dynein light chain 2a, cytoplasmic"/>
    <property type="match status" value="1"/>
</dbReference>
<dbReference type="InterPro" id="IPR024135">
    <property type="entry name" value="LAMTOR5"/>
</dbReference>
<dbReference type="PANTHER" id="PTHR13342">
    <property type="entry name" value="RAGULATOR COMPLEX PROTEIN LAMTOR5"/>
    <property type="match status" value="1"/>
</dbReference>
<dbReference type="PANTHER" id="PTHR13342:SF2">
    <property type="entry name" value="RAGULATOR COMPLEX PROTEIN LAMTOR5"/>
    <property type="match status" value="1"/>
</dbReference>
<dbReference type="Pfam" id="PF16672">
    <property type="entry name" value="LAMTOR5"/>
    <property type="match status" value="1"/>
</dbReference>
<dbReference type="PRINTS" id="PR02092">
    <property type="entry name" value="HEPBVIRUSXIP"/>
</dbReference>
<dbReference type="SUPFAM" id="SSF103196">
    <property type="entry name" value="Roadblock/LC7 domain"/>
    <property type="match status" value="1"/>
</dbReference>
<reference key="1">
    <citation type="submission" date="2005-08" db="EMBL/GenBank/DDBJ databases">
        <authorList>
            <consortium name="NIH - Mammalian Gene Collection (MGC) project"/>
        </authorList>
    </citation>
    <scope>NUCLEOTIDE SEQUENCE [LARGE SCALE MRNA]</scope>
    <source>
        <strain>Crossbred X Angus</strain>
        <tissue>Ileum</tissue>
    </source>
</reference>
<gene>
    <name type="primary">LAMTOR5</name>
</gene>
<feature type="chain" id="PRO_0000331594" description="Ragulator complex protein LAMTOR5">
    <location>
        <begin position="1"/>
        <end position="91"/>
    </location>
</feature>
<feature type="modified residue" description="N-acetylmethionine" evidence="1">
    <location>
        <position position="1"/>
    </location>
</feature>
<accession>Q3SZ68</accession>
<protein>
    <recommendedName>
        <fullName>Ragulator complex protein LAMTOR5</fullName>
    </recommendedName>
    <alternativeName>
        <fullName>Late endosomal/lysosomal adaptor and MAPK and MTOR activator 5</fullName>
    </alternativeName>
</protein>
<comment type="function">
    <text evidence="1">As part of the Ragulator complex it is involved in amino acid sensing and activation of mTORC1, a signaling complex promoting cell growth in response to growth factors, energy levels, and amino acids. Activated by amino acids through a mechanism involving the lysosomal V-ATPase, the Ragulator plays a dual role for the small GTPases Rag (RagA/RRAGA, RagB/RRAGB, RagC/RRAGC and/or RagD/RRAGD): it (1) acts as a guanine nucleotide exchange factor (GEF), activating the small GTPases Rag and (2) mediates recruitment of Rag GTPases to the lysosome membrane. Activated Ragulator and Rag GTPases function as a scaffold recruiting mTORC1 to lysosomes where it is in turn activated. When complexed to BIRC5, interferes with apoptosome assembly, preventing recruitment of pro-caspase-9 to oligomerized APAF1, thereby selectively suppressing apoptosis initiated via the mitochondrial/cytochrome c pathway.</text>
</comment>
<comment type="subunit">
    <text evidence="1">Homodimer. Part of the Ragulator complex composed of LAMTOR1, LAMTOR2, LAMTOR3, LAMTOR4 and LAMTOR5. LAMTOR4 and LAMTOR5 form a heterodimer that interacts, through LAMTOR1, with a LAMTOR2, LAMTOR3 heterodimer. The Ragulator complex interacts with both the mTORC1 complex and heterodimers constituted of the Rag GTPases RagA/RRAGA, RagB/RRAGB, RagC/RRAGC and RagD/RRAGD; regulated by amino acid availability. The Ragulator complex interacts with SLC38A9; the probable amino acid sensor. Component of the lysosomal folliculin complex (LFC), composed of FLCN, FNIP1 (or FNIP2), RagA/RRAGA or RagB/RRAGB GDP-bound, RagC/RRAGC or RagD/RRAGD GTP-bound, and Ragulator. Interacts with phosphorylated BIRC5; the resulting complex binds pro-caspase-9, as well as active caspase-9, but much less efficiently. Interacts with SUPV3L1.</text>
</comment>
<comment type="subcellular location">
    <subcellularLocation>
        <location evidence="1">Lysosome</location>
    </subcellularLocation>
    <subcellularLocation>
        <location evidence="1">Cytoplasm</location>
        <location evidence="1">Cytosol</location>
    </subcellularLocation>
</comment>
<comment type="similarity">
    <text evidence="2">Belongs to the LAMTOR5 family.</text>
</comment>